<reference key="1">
    <citation type="journal article" date="1997" name="Nature">
        <title>Genomic sequence of a Lyme disease spirochaete, Borrelia burgdorferi.</title>
        <authorList>
            <person name="Fraser C.M."/>
            <person name="Casjens S."/>
            <person name="Huang W.M."/>
            <person name="Sutton G.G."/>
            <person name="Clayton R.A."/>
            <person name="Lathigra R."/>
            <person name="White O."/>
            <person name="Ketchum K.A."/>
            <person name="Dodson R.J."/>
            <person name="Hickey E.K."/>
            <person name="Gwinn M.L."/>
            <person name="Dougherty B.A."/>
            <person name="Tomb J.-F."/>
            <person name="Fleischmann R.D."/>
            <person name="Richardson D.L."/>
            <person name="Peterson J.D."/>
            <person name="Kerlavage A.R."/>
            <person name="Quackenbush J."/>
            <person name="Salzberg S.L."/>
            <person name="Hanson M."/>
            <person name="van Vugt R."/>
            <person name="Palmer N."/>
            <person name="Adams M.D."/>
            <person name="Gocayne J.D."/>
            <person name="Weidman J.F."/>
            <person name="Utterback T.R."/>
            <person name="Watthey L."/>
            <person name="McDonald L.A."/>
            <person name="Artiach P."/>
            <person name="Bowman C."/>
            <person name="Garland S.A."/>
            <person name="Fujii C."/>
            <person name="Cotton M.D."/>
            <person name="Horst K."/>
            <person name="Roberts K.M."/>
            <person name="Hatch B."/>
            <person name="Smith H.O."/>
            <person name="Venter J.C."/>
        </authorList>
    </citation>
    <scope>NUCLEOTIDE SEQUENCE [LARGE SCALE GENOMIC DNA]</scope>
    <source>
        <strain>ATCC 35210 / DSM 4680 / CIP 102532 / B31</strain>
    </source>
</reference>
<organism>
    <name type="scientific">Borreliella burgdorferi (strain ATCC 35210 / DSM 4680 / CIP 102532 / B31)</name>
    <name type="common">Borrelia burgdorferi</name>
    <dbReference type="NCBI Taxonomy" id="224326"/>
    <lineage>
        <taxon>Bacteria</taxon>
        <taxon>Pseudomonadati</taxon>
        <taxon>Spirochaetota</taxon>
        <taxon>Spirochaetia</taxon>
        <taxon>Spirochaetales</taxon>
        <taxon>Borreliaceae</taxon>
        <taxon>Borreliella</taxon>
    </lineage>
</organism>
<protein>
    <recommendedName>
        <fullName evidence="1">Large ribosomal subunit protein bL35</fullName>
    </recommendedName>
    <alternativeName>
        <fullName evidence="2">50S ribosomal protein L35</fullName>
    </alternativeName>
</protein>
<proteinExistence type="evidence at protein level"/>
<evidence type="ECO:0000255" key="1">
    <source>
        <dbReference type="HAMAP-Rule" id="MF_00514"/>
    </source>
</evidence>
<evidence type="ECO:0000305" key="2"/>
<evidence type="ECO:0007829" key="3">
    <source>
        <dbReference type="PDB" id="8FN2"/>
    </source>
</evidence>
<feature type="chain" id="PRO_0000177333" description="Large ribosomal subunit protein bL35">
    <location>
        <begin position="1"/>
        <end position="66"/>
    </location>
</feature>
<feature type="helix" evidence="3">
    <location>
        <begin position="9"/>
        <end position="12"/>
    </location>
</feature>
<feature type="strand" evidence="3">
    <location>
        <begin position="23"/>
        <end position="25"/>
    </location>
</feature>
<feature type="strand" evidence="3">
    <location>
        <begin position="35"/>
        <end position="37"/>
    </location>
</feature>
<feature type="helix" evidence="3">
    <location>
        <begin position="39"/>
        <end position="46"/>
    </location>
</feature>
<feature type="helix" evidence="3">
    <location>
        <begin position="56"/>
        <end position="62"/>
    </location>
</feature>
<keyword id="KW-0002">3D-structure</keyword>
<keyword id="KW-1185">Reference proteome</keyword>
<keyword id="KW-0687">Ribonucleoprotein</keyword>
<keyword id="KW-0689">Ribosomal protein</keyword>
<gene>
    <name evidence="1" type="primary">rpmI</name>
    <name type="ordered locus">BB_0189</name>
</gene>
<accession>O51207</accession>
<sequence length="66" mass="7816">MANKMKTRKSAKKRYSFTVNGKVKYKKQNLRHILTKKSSKRKRNLRKSGNLSCFEVKRIKTLLPYG</sequence>
<name>RL35_BORBU</name>
<dbReference type="EMBL" id="AE000783">
    <property type="protein sequence ID" value="AAC66572.1"/>
    <property type="molecule type" value="Genomic_DNA"/>
</dbReference>
<dbReference type="PIR" id="E70123">
    <property type="entry name" value="E70123"/>
</dbReference>
<dbReference type="RefSeq" id="NP_212323.1">
    <property type="nucleotide sequence ID" value="NC_001318.1"/>
</dbReference>
<dbReference type="RefSeq" id="WP_002556787.1">
    <property type="nucleotide sequence ID" value="NC_001318.1"/>
</dbReference>
<dbReference type="PDB" id="8FMW">
    <property type="method" value="EM"/>
    <property type="resolution" value="2.86 A"/>
    <property type="chains" value="Ag=1-66"/>
</dbReference>
<dbReference type="PDB" id="8FN2">
    <property type="method" value="EM"/>
    <property type="resolution" value="3.40 A"/>
    <property type="chains" value="g=1-66"/>
</dbReference>
<dbReference type="PDBsum" id="8FMW"/>
<dbReference type="PDBsum" id="8FN2"/>
<dbReference type="EMDB" id="EMD-29298"/>
<dbReference type="EMDB" id="EMD-29304"/>
<dbReference type="SMR" id="O51207"/>
<dbReference type="STRING" id="224326.BB_0189"/>
<dbReference type="PaxDb" id="224326-BB_0189"/>
<dbReference type="EnsemblBacteria" id="AAC66572">
    <property type="protein sequence ID" value="AAC66572"/>
    <property type="gene ID" value="BB_0189"/>
</dbReference>
<dbReference type="GeneID" id="56567616"/>
<dbReference type="KEGG" id="bbu:BB_0189"/>
<dbReference type="PATRIC" id="fig|224326.49.peg.586"/>
<dbReference type="HOGENOM" id="CLU_169643_1_1_12"/>
<dbReference type="OrthoDB" id="47476at2"/>
<dbReference type="Proteomes" id="UP000001807">
    <property type="component" value="Chromosome"/>
</dbReference>
<dbReference type="GO" id="GO:0022625">
    <property type="term" value="C:cytosolic large ribosomal subunit"/>
    <property type="evidence" value="ECO:0007669"/>
    <property type="project" value="TreeGrafter"/>
</dbReference>
<dbReference type="GO" id="GO:0003735">
    <property type="term" value="F:structural constituent of ribosome"/>
    <property type="evidence" value="ECO:0007669"/>
    <property type="project" value="InterPro"/>
</dbReference>
<dbReference type="GO" id="GO:0006412">
    <property type="term" value="P:translation"/>
    <property type="evidence" value="ECO:0007669"/>
    <property type="project" value="UniProtKB-UniRule"/>
</dbReference>
<dbReference type="FunFam" id="4.10.410.60:FF:000001">
    <property type="entry name" value="50S ribosomal protein L35"/>
    <property type="match status" value="1"/>
</dbReference>
<dbReference type="Gene3D" id="4.10.410.60">
    <property type="match status" value="1"/>
</dbReference>
<dbReference type="HAMAP" id="MF_00514">
    <property type="entry name" value="Ribosomal_bL35"/>
    <property type="match status" value="1"/>
</dbReference>
<dbReference type="InterPro" id="IPR001706">
    <property type="entry name" value="Ribosomal_bL35"/>
</dbReference>
<dbReference type="InterPro" id="IPR021137">
    <property type="entry name" value="Ribosomal_bL35-like"/>
</dbReference>
<dbReference type="InterPro" id="IPR018265">
    <property type="entry name" value="Ribosomal_bL35_CS"/>
</dbReference>
<dbReference type="InterPro" id="IPR037229">
    <property type="entry name" value="Ribosomal_bL35_sf"/>
</dbReference>
<dbReference type="NCBIfam" id="TIGR00001">
    <property type="entry name" value="rpmI_bact"/>
    <property type="match status" value="1"/>
</dbReference>
<dbReference type="PANTHER" id="PTHR33343">
    <property type="entry name" value="54S RIBOSOMAL PROTEIN BL35M"/>
    <property type="match status" value="1"/>
</dbReference>
<dbReference type="PANTHER" id="PTHR33343:SF1">
    <property type="entry name" value="LARGE RIBOSOMAL SUBUNIT PROTEIN BL35M"/>
    <property type="match status" value="1"/>
</dbReference>
<dbReference type="Pfam" id="PF01632">
    <property type="entry name" value="Ribosomal_L35p"/>
    <property type="match status" value="1"/>
</dbReference>
<dbReference type="PRINTS" id="PR00064">
    <property type="entry name" value="RIBOSOMALL35"/>
</dbReference>
<dbReference type="SUPFAM" id="SSF143034">
    <property type="entry name" value="L35p-like"/>
    <property type="match status" value="1"/>
</dbReference>
<dbReference type="PROSITE" id="PS00936">
    <property type="entry name" value="RIBOSOMAL_L35"/>
    <property type="match status" value="1"/>
</dbReference>
<comment type="similarity">
    <text evidence="1">Belongs to the bacterial ribosomal protein bL35 family.</text>
</comment>